<reference key="1">
    <citation type="journal article" date="2002" name="Mol. Microbiol.">
        <title>Genome sequence of Streptococcus agalactiae, a pathogen causing invasive neonatal disease.</title>
        <authorList>
            <person name="Glaser P."/>
            <person name="Rusniok C."/>
            <person name="Buchrieser C."/>
            <person name="Chevalier F."/>
            <person name="Frangeul L."/>
            <person name="Msadek T."/>
            <person name="Zouine M."/>
            <person name="Couve E."/>
            <person name="Lalioui L."/>
            <person name="Poyart C."/>
            <person name="Trieu-Cuot P."/>
            <person name="Kunst F."/>
        </authorList>
    </citation>
    <scope>NUCLEOTIDE SEQUENCE [LARGE SCALE GENOMIC DNA]</scope>
    <source>
        <strain>NEM316</strain>
    </source>
</reference>
<name>RL11_STRA3</name>
<proteinExistence type="inferred from homology"/>
<dbReference type="EMBL" id="AL766852">
    <property type="protein sequence ID" value="CAD47238.1"/>
    <property type="molecule type" value="Genomic_DNA"/>
</dbReference>
<dbReference type="RefSeq" id="WP_001085803.1">
    <property type="nucleotide sequence ID" value="NC_004368.1"/>
</dbReference>
<dbReference type="SMR" id="Q8E424"/>
<dbReference type="KEGG" id="san:rplK"/>
<dbReference type="eggNOG" id="COG0080">
    <property type="taxonomic scope" value="Bacteria"/>
</dbReference>
<dbReference type="HOGENOM" id="CLU_074237_2_1_9"/>
<dbReference type="Proteomes" id="UP000000823">
    <property type="component" value="Chromosome"/>
</dbReference>
<dbReference type="GO" id="GO:0022625">
    <property type="term" value="C:cytosolic large ribosomal subunit"/>
    <property type="evidence" value="ECO:0007669"/>
    <property type="project" value="TreeGrafter"/>
</dbReference>
<dbReference type="GO" id="GO:0070180">
    <property type="term" value="F:large ribosomal subunit rRNA binding"/>
    <property type="evidence" value="ECO:0007669"/>
    <property type="project" value="UniProtKB-UniRule"/>
</dbReference>
<dbReference type="GO" id="GO:0003735">
    <property type="term" value="F:structural constituent of ribosome"/>
    <property type="evidence" value="ECO:0007669"/>
    <property type="project" value="InterPro"/>
</dbReference>
<dbReference type="GO" id="GO:0006412">
    <property type="term" value="P:translation"/>
    <property type="evidence" value="ECO:0007669"/>
    <property type="project" value="UniProtKB-UniRule"/>
</dbReference>
<dbReference type="CDD" id="cd00349">
    <property type="entry name" value="Ribosomal_L11"/>
    <property type="match status" value="1"/>
</dbReference>
<dbReference type="FunFam" id="1.10.10.250:FF:000001">
    <property type="entry name" value="50S ribosomal protein L11"/>
    <property type="match status" value="1"/>
</dbReference>
<dbReference type="FunFam" id="3.30.1550.10:FF:000001">
    <property type="entry name" value="50S ribosomal protein L11"/>
    <property type="match status" value="1"/>
</dbReference>
<dbReference type="Gene3D" id="1.10.10.250">
    <property type="entry name" value="Ribosomal protein L11, C-terminal domain"/>
    <property type="match status" value="1"/>
</dbReference>
<dbReference type="Gene3D" id="3.30.1550.10">
    <property type="entry name" value="Ribosomal protein L11/L12, N-terminal domain"/>
    <property type="match status" value="1"/>
</dbReference>
<dbReference type="HAMAP" id="MF_00736">
    <property type="entry name" value="Ribosomal_uL11"/>
    <property type="match status" value="1"/>
</dbReference>
<dbReference type="InterPro" id="IPR000911">
    <property type="entry name" value="Ribosomal_uL11"/>
</dbReference>
<dbReference type="InterPro" id="IPR006519">
    <property type="entry name" value="Ribosomal_uL11_bac-typ"/>
</dbReference>
<dbReference type="InterPro" id="IPR020783">
    <property type="entry name" value="Ribosomal_uL11_C"/>
</dbReference>
<dbReference type="InterPro" id="IPR036769">
    <property type="entry name" value="Ribosomal_uL11_C_sf"/>
</dbReference>
<dbReference type="InterPro" id="IPR020785">
    <property type="entry name" value="Ribosomal_uL11_CS"/>
</dbReference>
<dbReference type="InterPro" id="IPR020784">
    <property type="entry name" value="Ribosomal_uL11_N"/>
</dbReference>
<dbReference type="InterPro" id="IPR036796">
    <property type="entry name" value="Ribosomal_uL11_N_sf"/>
</dbReference>
<dbReference type="NCBIfam" id="TIGR01632">
    <property type="entry name" value="L11_bact"/>
    <property type="match status" value="1"/>
</dbReference>
<dbReference type="PANTHER" id="PTHR11661">
    <property type="entry name" value="60S RIBOSOMAL PROTEIN L12"/>
    <property type="match status" value="1"/>
</dbReference>
<dbReference type="PANTHER" id="PTHR11661:SF1">
    <property type="entry name" value="LARGE RIBOSOMAL SUBUNIT PROTEIN UL11M"/>
    <property type="match status" value="1"/>
</dbReference>
<dbReference type="Pfam" id="PF00298">
    <property type="entry name" value="Ribosomal_L11"/>
    <property type="match status" value="1"/>
</dbReference>
<dbReference type="Pfam" id="PF03946">
    <property type="entry name" value="Ribosomal_L11_N"/>
    <property type="match status" value="1"/>
</dbReference>
<dbReference type="SMART" id="SM00649">
    <property type="entry name" value="RL11"/>
    <property type="match status" value="1"/>
</dbReference>
<dbReference type="SUPFAM" id="SSF54747">
    <property type="entry name" value="Ribosomal L11/L12e N-terminal domain"/>
    <property type="match status" value="1"/>
</dbReference>
<dbReference type="SUPFAM" id="SSF46906">
    <property type="entry name" value="Ribosomal protein L11, C-terminal domain"/>
    <property type="match status" value="1"/>
</dbReference>
<dbReference type="PROSITE" id="PS00359">
    <property type="entry name" value="RIBOSOMAL_L11"/>
    <property type="match status" value="1"/>
</dbReference>
<gene>
    <name evidence="1" type="primary">rplK</name>
    <name type="ordered locus">gbs1579</name>
</gene>
<protein>
    <recommendedName>
        <fullName evidence="1">Large ribosomal subunit protein uL11</fullName>
    </recommendedName>
    <alternativeName>
        <fullName evidence="2">50S ribosomal protein L11</fullName>
    </alternativeName>
</protein>
<evidence type="ECO:0000255" key="1">
    <source>
        <dbReference type="HAMAP-Rule" id="MF_00736"/>
    </source>
</evidence>
<evidence type="ECO:0000305" key="2"/>
<organism>
    <name type="scientific">Streptococcus agalactiae serotype III (strain NEM316)</name>
    <dbReference type="NCBI Taxonomy" id="211110"/>
    <lineage>
        <taxon>Bacteria</taxon>
        <taxon>Bacillati</taxon>
        <taxon>Bacillota</taxon>
        <taxon>Bacilli</taxon>
        <taxon>Lactobacillales</taxon>
        <taxon>Streptococcaceae</taxon>
        <taxon>Streptococcus</taxon>
    </lineage>
</organism>
<keyword id="KW-0488">Methylation</keyword>
<keyword id="KW-0687">Ribonucleoprotein</keyword>
<keyword id="KW-0689">Ribosomal protein</keyword>
<keyword id="KW-0694">RNA-binding</keyword>
<keyword id="KW-0699">rRNA-binding</keyword>
<feature type="chain" id="PRO_0000104372" description="Large ribosomal subunit protein uL11">
    <location>
        <begin position="1"/>
        <end position="141"/>
    </location>
</feature>
<accession>Q8E424</accession>
<comment type="function">
    <text evidence="1">Forms part of the ribosomal stalk which helps the ribosome interact with GTP-bound translation factors.</text>
</comment>
<comment type="subunit">
    <text evidence="1">Part of the ribosomal stalk of the 50S ribosomal subunit. Interacts with L10 and the large rRNA to form the base of the stalk. L10 forms an elongated spine to which L12 dimers bind in a sequential fashion forming a multimeric L10(L12)X complex.</text>
</comment>
<comment type="PTM">
    <text evidence="1">One or more lysine residues are methylated.</text>
</comment>
<comment type="similarity">
    <text evidence="1">Belongs to the universal ribosomal protein uL11 family.</text>
</comment>
<sequence>MAKKVEKLVKLQIPAGKATPAPPVGPALGQAGINIMGFTKEFNARTADQAGMIIPVVISVYEDKSFDFITKTPPAAVLLKKAAGVEKGSGEPNKTKVATVTRAQVQEIAETKMPDLNAANLESAMRMIEGTARSMGFTVTD</sequence>